<comment type="function">
    <text evidence="1">Catalyzes a proton abstraction reaction that results in 2,5-elimination of pyruvate from 2-succinyl-5-enolpyruvyl-6-hydroxy-3-cyclohexene-1-carboxylate (SEPHCHC) and the formation of 2-succinyl-6-hydroxy-2,4-cyclohexadiene-1-carboxylate (SHCHC).</text>
</comment>
<comment type="catalytic activity">
    <reaction evidence="1">
        <text>5-enolpyruvoyl-6-hydroxy-2-succinyl-cyclohex-3-ene-1-carboxylate = (1R,6R)-6-hydroxy-2-succinyl-cyclohexa-2,4-diene-1-carboxylate + pyruvate</text>
        <dbReference type="Rhea" id="RHEA:25597"/>
        <dbReference type="ChEBI" id="CHEBI:15361"/>
        <dbReference type="ChEBI" id="CHEBI:58689"/>
        <dbReference type="ChEBI" id="CHEBI:58818"/>
        <dbReference type="EC" id="4.2.99.20"/>
    </reaction>
</comment>
<comment type="pathway">
    <text evidence="1">Quinol/quinone metabolism; 1,4-dihydroxy-2-naphthoate biosynthesis; 1,4-dihydroxy-2-naphthoate from chorismate: step 3/7.</text>
</comment>
<comment type="pathway">
    <text evidence="1">Quinol/quinone metabolism; menaquinone biosynthesis.</text>
</comment>
<comment type="subunit">
    <text evidence="1">Monomer.</text>
</comment>
<comment type="similarity">
    <text evidence="1">Belongs to the AB hydrolase superfamily. MenH family.</text>
</comment>
<keyword id="KW-0456">Lyase</keyword>
<keyword id="KW-0474">Menaquinone biosynthesis</keyword>
<feature type="chain" id="PRO_1000215862" description="2-succinyl-6-hydroxy-2,4-cyclohexadiene-1-carboxylate synthase">
    <location>
        <begin position="1"/>
        <end position="252"/>
    </location>
</feature>
<sequence>MILHAQAKHGKPGLPWLVFLHGFSGDCHEWQEVGEAFADYSRLYVDLPGHGGSAAISVDGFDDVTDLLRKTLVSYNILDFWLVGYSLGGRVAMMAACQGLAGLCGVIVEGGHPGLQNAEQRAERQRSDRQWVQRFLTEPLTAVFADWYQQPVFASLNDDQRRELVALRSNNNGATLAAMLEATSLAVQPDLRANLSARTFAFYYLCGERDSKFRALAAELAADCHVIPRAGHNAHRENPAGVIASLAQILRF</sequence>
<proteinExistence type="inferred from homology"/>
<reference key="1">
    <citation type="journal article" date="2009" name="J. Bacteriol.">
        <title>Genomic sequencing reveals regulatory mutations and recombinational events in the widely used MC4100 lineage of Escherichia coli K-12.</title>
        <authorList>
            <person name="Ferenci T."/>
            <person name="Zhou Z."/>
            <person name="Betteridge T."/>
            <person name="Ren Y."/>
            <person name="Liu Y."/>
            <person name="Feng L."/>
            <person name="Reeves P.R."/>
            <person name="Wang L."/>
        </authorList>
    </citation>
    <scope>NUCLEOTIDE SEQUENCE [LARGE SCALE GENOMIC DNA]</scope>
    <source>
        <strain>K12 / MC4100 / BW2952</strain>
    </source>
</reference>
<dbReference type="EC" id="4.2.99.20" evidence="1"/>
<dbReference type="EMBL" id="CP001396">
    <property type="protein sequence ID" value="ACR64782.1"/>
    <property type="molecule type" value="Genomic_DNA"/>
</dbReference>
<dbReference type="RefSeq" id="WP_000600499.1">
    <property type="nucleotide sequence ID" value="NC_012759.1"/>
</dbReference>
<dbReference type="SMR" id="C4ZUA6"/>
<dbReference type="ESTHER" id="ecoli-YFBB">
    <property type="family name" value="MenH_SHCHC"/>
</dbReference>
<dbReference type="MEROPS" id="S33.996"/>
<dbReference type="KEGG" id="ebw:BWG_2037"/>
<dbReference type="HOGENOM" id="CLU_020336_38_2_6"/>
<dbReference type="UniPathway" id="UPA00079"/>
<dbReference type="UniPathway" id="UPA01057">
    <property type="reaction ID" value="UER00900"/>
</dbReference>
<dbReference type="GO" id="GO:0070205">
    <property type="term" value="F:2-succinyl-6-hydroxy-2,4-cyclohexadiene-1-carboxylate synthase activity"/>
    <property type="evidence" value="ECO:0007669"/>
    <property type="project" value="UniProtKB-UniRule"/>
</dbReference>
<dbReference type="GO" id="GO:0009234">
    <property type="term" value="P:menaquinone biosynthetic process"/>
    <property type="evidence" value="ECO:0007669"/>
    <property type="project" value="UniProtKB-UniRule"/>
</dbReference>
<dbReference type="FunFam" id="3.40.50.1820:FF:000038">
    <property type="entry name" value="2-succinyl-6-hydroxy-2,4-cyclohexadiene-1-carboxylate synthase"/>
    <property type="match status" value="1"/>
</dbReference>
<dbReference type="Gene3D" id="3.40.50.1820">
    <property type="entry name" value="alpha/beta hydrolase"/>
    <property type="match status" value="1"/>
</dbReference>
<dbReference type="HAMAP" id="MF_01660">
    <property type="entry name" value="MenH"/>
    <property type="match status" value="1"/>
</dbReference>
<dbReference type="InterPro" id="IPR000073">
    <property type="entry name" value="AB_hydrolase_1"/>
</dbReference>
<dbReference type="InterPro" id="IPR029058">
    <property type="entry name" value="AB_hydrolase_fold"/>
</dbReference>
<dbReference type="InterPro" id="IPR022485">
    <property type="entry name" value="SHCHC_synthase_MenH"/>
</dbReference>
<dbReference type="NCBIfam" id="TIGR03695">
    <property type="entry name" value="menH_SHCHC"/>
    <property type="match status" value="1"/>
</dbReference>
<dbReference type="NCBIfam" id="NF008340">
    <property type="entry name" value="PRK11126.1"/>
    <property type="match status" value="1"/>
</dbReference>
<dbReference type="PANTHER" id="PTHR42916">
    <property type="entry name" value="2-SUCCINYL-5-ENOLPYRUVYL-6-HYDROXY-3-CYCLOHEXENE-1-CARBOXYLATE SYNTHASE"/>
    <property type="match status" value="1"/>
</dbReference>
<dbReference type="PANTHER" id="PTHR42916:SF1">
    <property type="entry name" value="PROTEIN PHYLLO, CHLOROPLASTIC"/>
    <property type="match status" value="1"/>
</dbReference>
<dbReference type="Pfam" id="PF12697">
    <property type="entry name" value="Abhydrolase_6"/>
    <property type="match status" value="1"/>
</dbReference>
<dbReference type="SUPFAM" id="SSF53474">
    <property type="entry name" value="alpha/beta-Hydrolases"/>
    <property type="match status" value="1"/>
</dbReference>
<accession>C4ZUA6</accession>
<name>MENH_ECOBW</name>
<evidence type="ECO:0000255" key="1">
    <source>
        <dbReference type="HAMAP-Rule" id="MF_01660"/>
    </source>
</evidence>
<gene>
    <name evidence="1" type="primary">menH</name>
    <name type="ordered locus">BWG_2037</name>
</gene>
<protein>
    <recommendedName>
        <fullName evidence="1">2-succinyl-6-hydroxy-2,4-cyclohexadiene-1-carboxylate synthase</fullName>
        <shortName evidence="1">SHCHC synthase</shortName>
        <ecNumber evidence="1">4.2.99.20</ecNumber>
    </recommendedName>
</protein>
<organism>
    <name type="scientific">Escherichia coli (strain K12 / MC4100 / BW2952)</name>
    <dbReference type="NCBI Taxonomy" id="595496"/>
    <lineage>
        <taxon>Bacteria</taxon>
        <taxon>Pseudomonadati</taxon>
        <taxon>Pseudomonadota</taxon>
        <taxon>Gammaproteobacteria</taxon>
        <taxon>Enterobacterales</taxon>
        <taxon>Enterobacteriaceae</taxon>
        <taxon>Escherichia</taxon>
    </lineage>
</organism>